<evidence type="ECO:0000250" key="1"/>
<evidence type="ECO:0000255" key="2">
    <source>
        <dbReference type="PROSITE-ProRule" id="PRU00134"/>
    </source>
</evidence>
<evidence type="ECO:0000255" key="3">
    <source>
        <dbReference type="PROSITE-ProRule" id="PRU00211"/>
    </source>
</evidence>
<evidence type="ECO:0000256" key="4">
    <source>
        <dbReference type="SAM" id="MobiDB-lite"/>
    </source>
</evidence>
<evidence type="ECO:0000269" key="5">
    <source>
    </source>
</evidence>
<evidence type="ECO:0000305" key="6"/>
<accession>A9CPT4</accession>
<feature type="chain" id="PRO_0000367316" description="Tudor domain-containing protein 1">
    <location>
        <begin position="1"/>
        <end position="1133"/>
    </location>
</feature>
<feature type="domain" description="Tudor 1" evidence="3">
    <location>
        <begin position="204"/>
        <end position="264"/>
    </location>
</feature>
<feature type="domain" description="Tudor 2" evidence="3">
    <location>
        <begin position="435"/>
        <end position="494"/>
    </location>
</feature>
<feature type="domain" description="Tudor 3" evidence="3">
    <location>
        <begin position="656"/>
        <end position="714"/>
    </location>
</feature>
<feature type="domain" description="Tudor 4" evidence="3">
    <location>
        <begin position="904"/>
        <end position="962"/>
    </location>
</feature>
<feature type="zinc finger region" description="MYND-type" evidence="2">
    <location>
        <begin position="75"/>
        <end position="111"/>
    </location>
</feature>
<feature type="region of interest" description="Disordered" evidence="4">
    <location>
        <begin position="1"/>
        <end position="55"/>
    </location>
</feature>
<feature type="region of interest" description="Disordered" evidence="4">
    <location>
        <begin position="786"/>
        <end position="836"/>
    </location>
</feature>
<feature type="region of interest" description="Disordered" evidence="4">
    <location>
        <begin position="1036"/>
        <end position="1104"/>
    </location>
</feature>
<feature type="compositionally biased region" description="Low complexity" evidence="4">
    <location>
        <begin position="37"/>
        <end position="46"/>
    </location>
</feature>
<feature type="compositionally biased region" description="Polar residues" evidence="4">
    <location>
        <begin position="808"/>
        <end position="821"/>
    </location>
</feature>
<feature type="compositionally biased region" description="Polar residues" evidence="4">
    <location>
        <begin position="1079"/>
        <end position="1088"/>
    </location>
</feature>
<feature type="binding site" evidence="2">
    <location>
        <position position="75"/>
    </location>
    <ligand>
        <name>Zn(2+)</name>
        <dbReference type="ChEBI" id="CHEBI:29105"/>
        <label>1</label>
    </ligand>
</feature>
<feature type="binding site" evidence="2">
    <location>
        <position position="78"/>
    </location>
    <ligand>
        <name>Zn(2+)</name>
        <dbReference type="ChEBI" id="CHEBI:29105"/>
        <label>1</label>
    </ligand>
</feature>
<feature type="binding site" evidence="2">
    <location>
        <position position="86"/>
    </location>
    <ligand>
        <name>Zn(2+)</name>
        <dbReference type="ChEBI" id="CHEBI:29105"/>
        <label>2</label>
    </ligand>
</feature>
<feature type="binding site" evidence="2">
    <location>
        <position position="89"/>
    </location>
    <ligand>
        <name>Zn(2+)</name>
        <dbReference type="ChEBI" id="CHEBI:29105"/>
        <label>2</label>
    </ligand>
</feature>
<feature type="binding site" evidence="2">
    <location>
        <position position="95"/>
    </location>
    <ligand>
        <name>Zn(2+)</name>
        <dbReference type="ChEBI" id="CHEBI:29105"/>
        <label>1</label>
    </ligand>
</feature>
<feature type="binding site" evidence="2">
    <location>
        <position position="99"/>
    </location>
    <ligand>
        <name>Zn(2+)</name>
        <dbReference type="ChEBI" id="CHEBI:29105"/>
        <label>1</label>
    </ligand>
</feature>
<feature type="binding site" evidence="2">
    <location>
        <position position="107"/>
    </location>
    <ligand>
        <name>Zn(2+)</name>
        <dbReference type="ChEBI" id="CHEBI:29105"/>
        <label>2</label>
    </ligand>
</feature>
<feature type="binding site" evidence="2">
    <location>
        <position position="111"/>
    </location>
    <ligand>
        <name>Zn(2+)</name>
        <dbReference type="ChEBI" id="CHEBI:29105"/>
        <label>2</label>
    </ligand>
</feature>
<gene>
    <name type="primary">tdrd1</name>
</gene>
<reference key="1">
    <citation type="journal article" date="2008" name="Dev. Dyn.">
        <title>Temporal and spatial localization of three germline-specific proteins in medaka.</title>
        <authorList>
            <person name="Aoki Y."/>
            <person name="Nagao I."/>
            <person name="Saito D."/>
            <person name="Ebe Y."/>
            <person name="Kinjo M."/>
            <person name="Tanaka M."/>
        </authorList>
    </citation>
    <scope>NUCLEOTIDE SEQUENCE [MRNA]</scope>
    <scope>SUBCELLULAR LOCATION</scope>
    <scope>TISSUE SPECIFICITY</scope>
</reference>
<organism>
    <name type="scientific">Oryzias latipes</name>
    <name type="common">Japanese rice fish</name>
    <name type="synonym">Japanese killifish</name>
    <dbReference type="NCBI Taxonomy" id="8090"/>
    <lineage>
        <taxon>Eukaryota</taxon>
        <taxon>Metazoa</taxon>
        <taxon>Chordata</taxon>
        <taxon>Craniata</taxon>
        <taxon>Vertebrata</taxon>
        <taxon>Euteleostomi</taxon>
        <taxon>Actinopterygii</taxon>
        <taxon>Neopterygii</taxon>
        <taxon>Teleostei</taxon>
        <taxon>Neoteleostei</taxon>
        <taxon>Acanthomorphata</taxon>
        <taxon>Ovalentaria</taxon>
        <taxon>Atherinomorphae</taxon>
        <taxon>Beloniformes</taxon>
        <taxon>Adrianichthyidae</taxon>
        <taxon>Oryziinae</taxon>
        <taxon>Oryzias</taxon>
    </lineage>
</organism>
<keyword id="KW-0963">Cytoplasm</keyword>
<keyword id="KW-0217">Developmental protein</keyword>
<keyword id="KW-0221">Differentiation</keyword>
<keyword id="KW-0469">Meiosis</keyword>
<keyword id="KW-0479">Metal-binding</keyword>
<keyword id="KW-1185">Reference proteome</keyword>
<keyword id="KW-0677">Repeat</keyword>
<keyword id="KW-0943">RNA-mediated gene silencing</keyword>
<keyword id="KW-0862">Zinc</keyword>
<keyword id="KW-0863">Zinc-finger</keyword>
<name>TDRD1_ORYLA</name>
<comment type="function">
    <text evidence="1">Plays a central role during spermatogenesis by participating in the repression transposable elements and preventing their mobilization, which is essential for the germline integrity. Acts via the piRNA metabolic process, which mediates the repression of transposable elements during meiosis by forming complexes composed of piRNAs and Piwi proteins and governs the methylation and subsequent repression of transposons. Required for the localization of Piwi proteins to the meiotic nuage. Involved in the piRNA metabolic process by ensuring the entry of correct transcripts into the normal piRNA pool and limiting the entry of cellular transcripts into the piRNA pathway. May act by allowing the recruitment of piRNA biogenesis or loading factors that ensure the correct entry of transcripts and piRNAs into Piwi proteins (By similarity).</text>
</comment>
<comment type="subunit">
    <text evidence="1">Interacts with MAEL. Interacts with PIWIL1, PIWIL2 and PIWIL4 (when methylated on arginine residues) (By similarity).</text>
</comment>
<comment type="subcellular location">
    <subcellularLocation>
        <location evidence="1">Cytoplasm</location>
    </subcellularLocation>
    <text evidence="1">Component of the meiotic nuage, also named P granule, a germ-cell-specific organelle required to repress transposon activity during meiosis.</text>
</comment>
<comment type="tissue specificity">
    <text evidence="5">Expressed in both the ovary and testis in the adult. Present in migrating primordial germ cells (PGCs) and also in the germ cells in both the gonadal primordia (stage 33), and in the developing ovary and testis.</text>
</comment>
<comment type="similarity">
    <text evidence="6">Belongs to the TDRD1 family.</text>
</comment>
<sequence>MNELRMPNLVRPNRPLREPASRPLTPSRFPVPSQPDAAYTGSAAGSTGLGSPGPAIMDGSTSFGLVQPAPTAHFCHYCGQQGIFRCKGCKKTPYCSVDCQREDWKAHRHMCKSFDPETVGENMKESPDSDNVREDSLNIQRIYLKDLNATKYTKGAEIQGAVVEFNSPGRFFFLPEDPKVMEALMSITAEXQKXPSSTVGTPYVPCVGEVCSVQFSXDLNWYRGLIQTLAADQKTAHVLYIDYGNAENVPVERIKPLNIATKPYCPCAMECQXAGVVPIVDSWSTECCMTVRQLLGGKTLTIKLVDTLKNGRVHTVDIQLSIGKQLSTFLLEQGYAFAEAAAVGSAPAKKDPSALLEASMENFKRCCEGKDINEWAQPPEPLTLTIGDRFSVVVSHFQSPTDFIVQKVENAGVIQDLQLKLREHCSGVETQQDFRPAPGTVCCAQFSEDKQWYRAQVLAYSTEKSVCVGYIDFGNSEEVDLNHLRPISPALLALPKQAISCILAGVQPVEDSWSEECISTMLRMIANKTVNVEIQSAHKGKALVAIIEGEGYSEINVAELLISANYAAPADSNTLQQTEETTASAEPPASPPVCEPLVWSCVELPSDGQTVVLSTSAVTSPAEFYCCVGPTTDHQVLMELGVQLKQHCQSDSTYFVPKVGEPCCVKFSGDGKWYRAMVKELLGDVVKVNFVDFGHNMIVGKGCLRSITPKLLKLPFQAVRCWLAGVKPAGSEWSSEALLWFQNLVDGAQLLARVVSVSQQGYGVELESGGQSVAAALVSQQFAKPSGNLSKDPVRSPTTKQEDLRGGDQSQALTPASNDTQAVCEDGKSEEEPSEVATFSSAWKTAELPLNETFQPCVAAVINPTLFYLLHPIQNVDQQKLQEVMLELALHCSNYQSSSSVDTRPVPGAACCAQFSVDKIWYRAIILEVGEAEMSVVYADYGNSEKVPVSQILPIPTRLLQLPFKIIRCTLAGNEHFPVEWPPQVQQVFRSELLNVMATVQSFDGSANVLSLALPPERGGRNLAAVIQEMLHVHRKGSPLPDASQTPGSDATEPSCIKLGSTTASPDEPEDAAEPADAVTNTQESTPQEQKEMDQATSVHDLQGPGCCCQSLKKQMDRLEKMVQLLLSLQAEG</sequence>
<dbReference type="EMBL" id="AB306932">
    <property type="protein sequence ID" value="BAF94306.1"/>
    <property type="molecule type" value="mRNA"/>
</dbReference>
<dbReference type="RefSeq" id="NP_001116401.1">
    <property type="nucleotide sequence ID" value="NM_001122929.2"/>
</dbReference>
<dbReference type="FunCoup" id="A9CPT4">
    <property type="interactions" value="793"/>
</dbReference>
<dbReference type="STRING" id="8090.ENSORLP00000006085"/>
<dbReference type="GeneID" id="100144383"/>
<dbReference type="KEGG" id="ola:100144383"/>
<dbReference type="CTD" id="56165"/>
<dbReference type="eggNOG" id="KOG2039">
    <property type="taxonomic scope" value="Eukaryota"/>
</dbReference>
<dbReference type="InParanoid" id="A9CPT4"/>
<dbReference type="OrthoDB" id="341421at2759"/>
<dbReference type="Proteomes" id="UP000001038">
    <property type="component" value="Unplaced"/>
</dbReference>
<dbReference type="Proteomes" id="UP000265180">
    <property type="component" value="Chromosome 9"/>
</dbReference>
<dbReference type="Proteomes" id="UP000265200">
    <property type="component" value="Chromosome 9"/>
</dbReference>
<dbReference type="GO" id="GO:0043186">
    <property type="term" value="C:P granule"/>
    <property type="evidence" value="ECO:0000314"/>
    <property type="project" value="UniProtKB"/>
</dbReference>
<dbReference type="GO" id="GO:0071546">
    <property type="term" value="C:pi-body"/>
    <property type="evidence" value="ECO:0000250"/>
    <property type="project" value="UniProtKB"/>
</dbReference>
<dbReference type="GO" id="GO:0008270">
    <property type="term" value="F:zinc ion binding"/>
    <property type="evidence" value="ECO:0007669"/>
    <property type="project" value="UniProtKB-KW"/>
</dbReference>
<dbReference type="GO" id="GO:0007281">
    <property type="term" value="P:germ cell development"/>
    <property type="evidence" value="ECO:0000250"/>
    <property type="project" value="UniProtKB"/>
</dbReference>
<dbReference type="GO" id="GO:0051321">
    <property type="term" value="P:meiotic cell cycle"/>
    <property type="evidence" value="ECO:0007669"/>
    <property type="project" value="UniProtKB-KW"/>
</dbReference>
<dbReference type="GO" id="GO:0030719">
    <property type="term" value="P:P granule organization"/>
    <property type="evidence" value="ECO:0000318"/>
    <property type="project" value="GO_Central"/>
</dbReference>
<dbReference type="GO" id="GO:0034587">
    <property type="term" value="P:piRNA processing"/>
    <property type="evidence" value="ECO:0000250"/>
    <property type="project" value="UniProtKB"/>
</dbReference>
<dbReference type="GO" id="GO:0007283">
    <property type="term" value="P:spermatogenesis"/>
    <property type="evidence" value="ECO:0000250"/>
    <property type="project" value="UniProtKB"/>
</dbReference>
<dbReference type="GO" id="GO:0141196">
    <property type="term" value="P:transposable element silencing by piRNA-mediated DNA methylation"/>
    <property type="evidence" value="ECO:0000250"/>
    <property type="project" value="UniProtKB"/>
</dbReference>
<dbReference type="CDD" id="cd20408">
    <property type="entry name" value="Tudor_TDRD1_rpt1"/>
    <property type="match status" value="1"/>
</dbReference>
<dbReference type="CDD" id="cd20409">
    <property type="entry name" value="Tudor_TDRD1_rpt2"/>
    <property type="match status" value="1"/>
</dbReference>
<dbReference type="CDD" id="cd20410">
    <property type="entry name" value="Tudor_TDRD1_rpt3"/>
    <property type="match status" value="1"/>
</dbReference>
<dbReference type="FunFam" id="2.30.30.140:FF:000018">
    <property type="entry name" value="Serine/threonine-protein kinase 31"/>
    <property type="match status" value="1"/>
</dbReference>
<dbReference type="FunFam" id="2.30.30.140:FF:000048">
    <property type="entry name" value="Tudor domain containing 1"/>
    <property type="match status" value="1"/>
</dbReference>
<dbReference type="FunFam" id="6.10.140.2220:FF:000011">
    <property type="entry name" value="Tudor domain containing 1"/>
    <property type="match status" value="1"/>
</dbReference>
<dbReference type="FunFam" id="2.30.30.140:FF:000091">
    <property type="entry name" value="Tudor domain-containing protein 1"/>
    <property type="match status" value="1"/>
</dbReference>
<dbReference type="Gene3D" id="2.30.30.140">
    <property type="match status" value="4"/>
</dbReference>
<dbReference type="Gene3D" id="2.40.50.90">
    <property type="match status" value="4"/>
</dbReference>
<dbReference type="Gene3D" id="6.10.140.2220">
    <property type="match status" value="1"/>
</dbReference>
<dbReference type="InterPro" id="IPR035437">
    <property type="entry name" value="SNase_OB-fold_sf"/>
</dbReference>
<dbReference type="InterPro" id="IPR002999">
    <property type="entry name" value="Tudor"/>
</dbReference>
<dbReference type="InterPro" id="IPR050621">
    <property type="entry name" value="Tudor_domain_containing"/>
</dbReference>
<dbReference type="InterPro" id="IPR047376">
    <property type="entry name" value="Tudor_TDRD1_rpt1"/>
</dbReference>
<dbReference type="InterPro" id="IPR047377">
    <property type="entry name" value="Tudor_TDRD1_rpt2"/>
</dbReference>
<dbReference type="InterPro" id="IPR047378">
    <property type="entry name" value="Tudor_TDRD1_rpt3"/>
</dbReference>
<dbReference type="InterPro" id="IPR002893">
    <property type="entry name" value="Znf_MYND"/>
</dbReference>
<dbReference type="PANTHER" id="PTHR22948:SF29">
    <property type="entry name" value="FI02030P-RELATED"/>
    <property type="match status" value="1"/>
</dbReference>
<dbReference type="PANTHER" id="PTHR22948">
    <property type="entry name" value="TUDOR DOMAIN CONTAINING PROTEIN"/>
    <property type="match status" value="1"/>
</dbReference>
<dbReference type="Pfam" id="PF00567">
    <property type="entry name" value="TUDOR"/>
    <property type="match status" value="4"/>
</dbReference>
<dbReference type="Pfam" id="PF01753">
    <property type="entry name" value="zf-MYND"/>
    <property type="match status" value="1"/>
</dbReference>
<dbReference type="SMART" id="SM00333">
    <property type="entry name" value="TUDOR"/>
    <property type="match status" value="4"/>
</dbReference>
<dbReference type="SUPFAM" id="SSF144232">
    <property type="entry name" value="HIT/MYND zinc finger-like"/>
    <property type="match status" value="1"/>
</dbReference>
<dbReference type="SUPFAM" id="SSF63748">
    <property type="entry name" value="Tudor/PWWP/MBT"/>
    <property type="match status" value="4"/>
</dbReference>
<dbReference type="PROSITE" id="PS50304">
    <property type="entry name" value="TUDOR"/>
    <property type="match status" value="4"/>
</dbReference>
<dbReference type="PROSITE" id="PS01360">
    <property type="entry name" value="ZF_MYND_1"/>
    <property type="match status" value="1"/>
</dbReference>
<dbReference type="PROSITE" id="PS50865">
    <property type="entry name" value="ZF_MYND_2"/>
    <property type="match status" value="1"/>
</dbReference>
<protein>
    <recommendedName>
        <fullName>Tudor domain-containing protein 1</fullName>
    </recommendedName>
</protein>
<proteinExistence type="evidence at transcript level"/>